<evidence type="ECO:0000255" key="1">
    <source>
        <dbReference type="HAMAP-Rule" id="MF_00321"/>
    </source>
</evidence>
<comment type="function">
    <text evidence="1">Necessary for normal cell division and for the maintenance of normal septation.</text>
</comment>
<comment type="cofactor">
    <cofactor evidence="1">
        <name>Mg(2+)</name>
        <dbReference type="ChEBI" id="CHEBI:18420"/>
    </cofactor>
</comment>
<comment type="similarity">
    <text evidence="1">Belongs to the TRAFAC class TrmE-Era-EngA-EngB-Septin-like GTPase superfamily. EngB GTPase family.</text>
</comment>
<dbReference type="EMBL" id="CP001233">
    <property type="protein sequence ID" value="ACP04447.1"/>
    <property type="molecule type" value="Genomic_DNA"/>
</dbReference>
<dbReference type="SMR" id="C3LPV3"/>
<dbReference type="KEGG" id="vcm:VCM66_0111"/>
<dbReference type="HOGENOM" id="CLU_033732_1_2_6"/>
<dbReference type="Proteomes" id="UP000001217">
    <property type="component" value="Chromosome I"/>
</dbReference>
<dbReference type="GO" id="GO:0005829">
    <property type="term" value="C:cytosol"/>
    <property type="evidence" value="ECO:0007669"/>
    <property type="project" value="TreeGrafter"/>
</dbReference>
<dbReference type="GO" id="GO:0005525">
    <property type="term" value="F:GTP binding"/>
    <property type="evidence" value="ECO:0007669"/>
    <property type="project" value="UniProtKB-UniRule"/>
</dbReference>
<dbReference type="GO" id="GO:0046872">
    <property type="term" value="F:metal ion binding"/>
    <property type="evidence" value="ECO:0007669"/>
    <property type="project" value="UniProtKB-KW"/>
</dbReference>
<dbReference type="GO" id="GO:0000917">
    <property type="term" value="P:division septum assembly"/>
    <property type="evidence" value="ECO:0007669"/>
    <property type="project" value="UniProtKB-KW"/>
</dbReference>
<dbReference type="CDD" id="cd01876">
    <property type="entry name" value="YihA_EngB"/>
    <property type="match status" value="1"/>
</dbReference>
<dbReference type="FunFam" id="3.40.50.300:FF:000098">
    <property type="entry name" value="Probable GTP-binding protein EngB"/>
    <property type="match status" value="1"/>
</dbReference>
<dbReference type="Gene3D" id="3.40.50.300">
    <property type="entry name" value="P-loop containing nucleotide triphosphate hydrolases"/>
    <property type="match status" value="1"/>
</dbReference>
<dbReference type="HAMAP" id="MF_00321">
    <property type="entry name" value="GTPase_EngB"/>
    <property type="match status" value="1"/>
</dbReference>
<dbReference type="InterPro" id="IPR030393">
    <property type="entry name" value="G_ENGB_dom"/>
</dbReference>
<dbReference type="InterPro" id="IPR006073">
    <property type="entry name" value="GTP-bd"/>
</dbReference>
<dbReference type="InterPro" id="IPR019987">
    <property type="entry name" value="GTP-bd_ribosome_bio_YsxC"/>
</dbReference>
<dbReference type="InterPro" id="IPR027417">
    <property type="entry name" value="P-loop_NTPase"/>
</dbReference>
<dbReference type="NCBIfam" id="TIGR03598">
    <property type="entry name" value="GTPase_YsxC"/>
    <property type="match status" value="1"/>
</dbReference>
<dbReference type="PANTHER" id="PTHR11649:SF13">
    <property type="entry name" value="ENGB-TYPE G DOMAIN-CONTAINING PROTEIN"/>
    <property type="match status" value="1"/>
</dbReference>
<dbReference type="PANTHER" id="PTHR11649">
    <property type="entry name" value="MSS1/TRME-RELATED GTP-BINDING PROTEIN"/>
    <property type="match status" value="1"/>
</dbReference>
<dbReference type="Pfam" id="PF01926">
    <property type="entry name" value="MMR_HSR1"/>
    <property type="match status" value="1"/>
</dbReference>
<dbReference type="SUPFAM" id="SSF52540">
    <property type="entry name" value="P-loop containing nucleoside triphosphate hydrolases"/>
    <property type="match status" value="1"/>
</dbReference>
<dbReference type="PROSITE" id="PS51706">
    <property type="entry name" value="G_ENGB"/>
    <property type="match status" value="1"/>
</dbReference>
<organism>
    <name type="scientific">Vibrio cholerae serotype O1 (strain M66-2)</name>
    <dbReference type="NCBI Taxonomy" id="579112"/>
    <lineage>
        <taxon>Bacteria</taxon>
        <taxon>Pseudomonadati</taxon>
        <taxon>Pseudomonadota</taxon>
        <taxon>Gammaproteobacteria</taxon>
        <taxon>Vibrionales</taxon>
        <taxon>Vibrionaceae</taxon>
        <taxon>Vibrio</taxon>
    </lineage>
</organism>
<gene>
    <name evidence="1" type="primary">engB</name>
    <name type="ordered locus">VCM66_0111</name>
</gene>
<reference key="1">
    <citation type="journal article" date="2008" name="PLoS ONE">
        <title>A recalibrated molecular clock and independent origins for the cholera pandemic clones.</title>
        <authorList>
            <person name="Feng L."/>
            <person name="Reeves P.R."/>
            <person name="Lan R."/>
            <person name="Ren Y."/>
            <person name="Gao C."/>
            <person name="Zhou Z."/>
            <person name="Ren Y."/>
            <person name="Cheng J."/>
            <person name="Wang W."/>
            <person name="Wang J."/>
            <person name="Qian W."/>
            <person name="Li D."/>
            <person name="Wang L."/>
        </authorList>
    </citation>
    <scope>NUCLEOTIDE SEQUENCE [LARGE SCALE GENOMIC DNA]</scope>
    <source>
        <strain>M66-2</strain>
    </source>
</reference>
<name>ENGB_VIBCM</name>
<keyword id="KW-0131">Cell cycle</keyword>
<keyword id="KW-0132">Cell division</keyword>
<keyword id="KW-0342">GTP-binding</keyword>
<keyword id="KW-0460">Magnesium</keyword>
<keyword id="KW-0479">Metal-binding</keyword>
<keyword id="KW-0547">Nucleotide-binding</keyword>
<keyword id="KW-0717">Septation</keyword>
<feature type="chain" id="PRO_1000189944" description="Probable GTP-binding protein EngB">
    <location>
        <begin position="1"/>
        <end position="220"/>
    </location>
</feature>
<feature type="domain" description="EngB-type G" evidence="1">
    <location>
        <begin position="26"/>
        <end position="200"/>
    </location>
</feature>
<feature type="binding site" evidence="1">
    <location>
        <begin position="34"/>
        <end position="41"/>
    </location>
    <ligand>
        <name>GTP</name>
        <dbReference type="ChEBI" id="CHEBI:37565"/>
    </ligand>
</feature>
<feature type="binding site" evidence="1">
    <location>
        <position position="41"/>
    </location>
    <ligand>
        <name>Mg(2+)</name>
        <dbReference type="ChEBI" id="CHEBI:18420"/>
    </ligand>
</feature>
<feature type="binding site" evidence="1">
    <location>
        <begin position="61"/>
        <end position="65"/>
    </location>
    <ligand>
        <name>GTP</name>
        <dbReference type="ChEBI" id="CHEBI:37565"/>
    </ligand>
</feature>
<feature type="binding site" evidence="1">
    <location>
        <position position="63"/>
    </location>
    <ligand>
        <name>Mg(2+)</name>
        <dbReference type="ChEBI" id="CHEBI:18420"/>
    </ligand>
</feature>
<feature type="binding site" evidence="1">
    <location>
        <begin position="79"/>
        <end position="82"/>
    </location>
    <ligand>
        <name>GTP</name>
        <dbReference type="ChEBI" id="CHEBI:37565"/>
    </ligand>
</feature>
<feature type="binding site" evidence="1">
    <location>
        <begin position="146"/>
        <end position="149"/>
    </location>
    <ligand>
        <name>GTP</name>
        <dbReference type="ChEBI" id="CHEBI:37565"/>
    </ligand>
</feature>
<feature type="binding site" evidence="1">
    <location>
        <begin position="179"/>
        <end position="181"/>
    </location>
    <ligand>
        <name>GTP</name>
        <dbReference type="ChEBI" id="CHEBI:37565"/>
    </ligand>
</feature>
<sequence>MSVKIHYQNTHFITSAPDIRHLPEDEGIEIAFAGRSNAGKSSSLNRLTNQKNLAKTSKTPGRTQLINLFKVADGCHIVDLPGYGFAQVPLEMKLKWQRALGEYLQKRQSLKGLVVLMDIRHPMKDLDQQLIIWAVECGIPVQVMLTKADKLKSGARKAQVLKVREEAKTFGGDVAVDAFSSLSGIGVDTLRAKLDEWYAPMLAALAEQEEGEQPESSTDQ</sequence>
<protein>
    <recommendedName>
        <fullName evidence="1">Probable GTP-binding protein EngB</fullName>
    </recommendedName>
</protein>
<accession>C3LPV3</accession>
<proteinExistence type="inferred from homology"/>